<evidence type="ECO:0000255" key="1">
    <source>
        <dbReference type="HAMAP-Rule" id="MF_00111"/>
    </source>
</evidence>
<evidence type="ECO:0000269" key="2">
    <source>
    </source>
</evidence>
<evidence type="ECO:0000305" key="3">
    <source>
    </source>
</evidence>
<evidence type="ECO:0007744" key="4">
    <source>
        <dbReference type="PDB" id="2YVW"/>
    </source>
</evidence>
<evidence type="ECO:0007744" key="5">
    <source>
        <dbReference type="PDB" id="3SWG"/>
    </source>
</evidence>
<evidence type="ECO:0007829" key="6">
    <source>
        <dbReference type="PDB" id="2YVW"/>
    </source>
</evidence>
<comment type="function">
    <text evidence="1">Cell wall formation. Adds enolpyruvyl to UDP-N-acetylglucosamine.</text>
</comment>
<comment type="catalytic activity">
    <reaction evidence="1">
        <text>phosphoenolpyruvate + UDP-N-acetyl-alpha-D-glucosamine = UDP-N-acetyl-3-O-(1-carboxyvinyl)-alpha-D-glucosamine + phosphate</text>
        <dbReference type="Rhea" id="RHEA:18681"/>
        <dbReference type="ChEBI" id="CHEBI:43474"/>
        <dbReference type="ChEBI" id="CHEBI:57705"/>
        <dbReference type="ChEBI" id="CHEBI:58702"/>
        <dbReference type="ChEBI" id="CHEBI:68483"/>
        <dbReference type="EC" id="2.5.1.7"/>
    </reaction>
</comment>
<comment type="pathway">
    <text evidence="1">Cell wall biogenesis; peptidoglycan biosynthesis.</text>
</comment>
<comment type="subcellular location">
    <subcellularLocation>
        <location evidence="1">Cytoplasm</location>
    </subcellularLocation>
</comment>
<comment type="similarity">
    <text evidence="1">Belongs to the EPSP synthase family. MurA subfamily.</text>
</comment>
<name>MURA_AQUAE</name>
<feature type="chain" id="PRO_0000178845" description="UDP-N-acetylglucosamine 1-carboxyvinyltransferase">
    <location>
        <begin position="1"/>
        <end position="425"/>
    </location>
</feature>
<feature type="active site" description="Proton donor" evidence="1 3">
    <location>
        <position position="124"/>
    </location>
</feature>
<feature type="binding site" evidence="3 4 5">
    <location>
        <begin position="31"/>
        <end position="32"/>
    </location>
    <ligand>
        <name>phosphoenolpyruvate</name>
        <dbReference type="ChEBI" id="CHEBI:58702"/>
    </ligand>
</feature>
<feature type="binding site" evidence="1">
    <location>
        <position position="100"/>
    </location>
    <ligand>
        <name>UDP-N-acetyl-alpha-D-glucosamine</name>
        <dbReference type="ChEBI" id="CHEBI:57705"/>
    </ligand>
</feature>
<feature type="binding site" evidence="2 4 5">
    <location>
        <begin position="129"/>
        <end position="133"/>
    </location>
    <ligand>
        <name>UDP-N-acetyl-alpha-D-glucosamine</name>
        <dbReference type="ChEBI" id="CHEBI:57705"/>
    </ligand>
</feature>
<feature type="binding site" evidence="2 4 5">
    <location>
        <begin position="170"/>
        <end position="172"/>
    </location>
    <ligand>
        <name>UDP-N-acetyl-alpha-D-glucosamine</name>
        <dbReference type="ChEBI" id="CHEBI:57705"/>
    </ligand>
</feature>
<feature type="binding site" evidence="2 4 5">
    <location>
        <position position="311"/>
    </location>
    <ligand>
        <name>UDP-N-acetyl-alpha-D-glucosamine</name>
        <dbReference type="ChEBI" id="CHEBI:57705"/>
    </ligand>
</feature>
<feature type="binding site" evidence="2 4 5">
    <location>
        <position position="333"/>
    </location>
    <ligand>
        <name>UDP-N-acetyl-alpha-D-glucosamine</name>
        <dbReference type="ChEBI" id="CHEBI:57705"/>
    </ligand>
</feature>
<feature type="modified residue" description="2-(S-cysteinyl)pyruvic acid O-phosphothioketal" evidence="1 3">
    <location>
        <position position="124"/>
    </location>
</feature>
<feature type="strand" evidence="6">
    <location>
        <begin position="12"/>
        <end position="16"/>
    </location>
</feature>
<feature type="strand" evidence="6">
    <location>
        <begin position="22"/>
        <end position="26"/>
    </location>
</feature>
<feature type="helix" evidence="6">
    <location>
        <begin position="31"/>
        <end position="40"/>
    </location>
</feature>
<feature type="helix" evidence="6">
    <location>
        <begin position="41"/>
        <end position="43"/>
    </location>
</feature>
<feature type="strand" evidence="6">
    <location>
        <begin position="48"/>
        <end position="52"/>
    </location>
</feature>
<feature type="helix" evidence="6">
    <location>
        <begin position="57"/>
        <end position="68"/>
    </location>
</feature>
<feature type="strand" evidence="6">
    <location>
        <begin position="72"/>
        <end position="76"/>
    </location>
</feature>
<feature type="strand" evidence="6">
    <location>
        <begin position="79"/>
        <end position="83"/>
    </location>
</feature>
<feature type="helix" evidence="6">
    <location>
        <begin position="93"/>
        <end position="98"/>
    </location>
</feature>
<feature type="helix" evidence="6">
    <location>
        <begin position="100"/>
        <end position="105"/>
    </location>
</feature>
<feature type="helix" evidence="6">
    <location>
        <begin position="106"/>
        <end position="113"/>
    </location>
</feature>
<feature type="strand" evidence="6">
    <location>
        <begin position="114"/>
        <end position="119"/>
    </location>
</feature>
<feature type="helix" evidence="6">
    <location>
        <begin position="132"/>
        <end position="140"/>
    </location>
</feature>
<feature type="strand" evidence="6">
    <location>
        <begin position="144"/>
        <end position="148"/>
    </location>
</feature>
<feature type="strand" evidence="6">
    <location>
        <begin position="151"/>
        <end position="155"/>
    </location>
</feature>
<feature type="strand" evidence="6">
    <location>
        <begin position="163"/>
        <end position="165"/>
    </location>
</feature>
<feature type="helix" evidence="6">
    <location>
        <begin position="171"/>
        <end position="181"/>
    </location>
</feature>
<feature type="strand" evidence="6">
    <location>
        <begin position="185"/>
        <end position="192"/>
    </location>
</feature>
<feature type="helix" evidence="6">
    <location>
        <begin position="197"/>
        <end position="208"/>
    </location>
</feature>
<feature type="strand" evidence="6">
    <location>
        <begin position="212"/>
        <end position="216"/>
    </location>
</feature>
<feature type="strand" evidence="6">
    <location>
        <begin position="219"/>
        <end position="223"/>
    </location>
</feature>
<feature type="strand" evidence="6">
    <location>
        <begin position="232"/>
        <end position="234"/>
    </location>
</feature>
<feature type="helix" evidence="6">
    <location>
        <begin position="239"/>
        <end position="251"/>
    </location>
</feature>
<feature type="strand" evidence="6">
    <location>
        <begin position="255"/>
        <end position="260"/>
    </location>
</feature>
<feature type="helix" evidence="6">
    <location>
        <begin position="263"/>
        <end position="265"/>
    </location>
</feature>
<feature type="helix" evidence="6">
    <location>
        <begin position="267"/>
        <end position="276"/>
    </location>
</feature>
<feature type="strand" evidence="6">
    <location>
        <begin position="278"/>
        <end position="283"/>
    </location>
</feature>
<feature type="strand" evidence="6">
    <location>
        <begin position="286"/>
        <end position="291"/>
    </location>
</feature>
<feature type="strand" evidence="6">
    <location>
        <begin position="300"/>
        <end position="302"/>
    </location>
</feature>
<feature type="helix" evidence="6">
    <location>
        <begin position="310"/>
        <end position="320"/>
    </location>
</feature>
<feature type="strand" evidence="6">
    <location>
        <begin position="323"/>
        <end position="330"/>
    </location>
</feature>
<feature type="helix" evidence="6">
    <location>
        <begin position="339"/>
        <end position="345"/>
    </location>
</feature>
<feature type="turn" evidence="6">
    <location>
        <begin position="346"/>
        <end position="348"/>
    </location>
</feature>
<feature type="strand" evidence="6">
    <location>
        <begin position="351"/>
        <end position="354"/>
    </location>
</feature>
<feature type="strand" evidence="6">
    <location>
        <begin position="357"/>
        <end position="361"/>
    </location>
</feature>
<feature type="strand" evidence="6">
    <location>
        <begin position="370"/>
        <end position="372"/>
    </location>
</feature>
<feature type="turn" evidence="6">
    <location>
        <begin position="376"/>
        <end position="379"/>
    </location>
</feature>
<feature type="helix" evidence="6">
    <location>
        <begin position="380"/>
        <end position="388"/>
    </location>
</feature>
<feature type="strand" evidence="6">
    <location>
        <begin position="389"/>
        <end position="396"/>
    </location>
</feature>
<feature type="helix" evidence="6">
    <location>
        <begin position="399"/>
        <end position="404"/>
    </location>
</feature>
<feature type="helix" evidence="6">
    <location>
        <begin position="408"/>
        <end position="414"/>
    </location>
</feature>
<feature type="strand" evidence="6">
    <location>
        <begin position="419"/>
        <end position="422"/>
    </location>
</feature>
<sequence>MKNTTLYTYRDYFVIRGGKPLTGKVKISGAKNAALPIMFATILTEEPCTITNVPDLLDVRNTLLLLRELGAELEFLNNTVFINPSINSFITNQEIIRRMRASVLSLGPLLGRFGRAVVGLPGGCSIGARPIDQHLKFFKEAGADVEVREGYVYVNLKEKRRVHFKFDLVTVTGTENALLYLASVPEESILENIALEPEVMDLIEVLKKMGAHVKVEGRSAYVKGSENLKGFTHSVIPDRIEAGTFMVGAVLTDGEILLENARINHLRAVVEKLKLIGGEVVEENGNLRVFRKESLRACDIETQVYPGFPTDMQAQFMALLSVAKGKSRIKENIFEHRFHHAQELNRLGANITVRGNTAYVEGVERLYGSEVYSTDLRASASLVLAGLVAQGETVVRDVYHLDRGYEKLEEKLKKLGADIERVSEL</sequence>
<organism>
    <name type="scientific">Aquifex aeolicus (strain VF5)</name>
    <dbReference type="NCBI Taxonomy" id="224324"/>
    <lineage>
        <taxon>Bacteria</taxon>
        <taxon>Pseudomonadati</taxon>
        <taxon>Aquificota</taxon>
        <taxon>Aquificia</taxon>
        <taxon>Aquificales</taxon>
        <taxon>Aquificaceae</taxon>
        <taxon>Aquifex</taxon>
    </lineage>
</organism>
<keyword id="KW-0002">3D-structure</keyword>
<keyword id="KW-0131">Cell cycle</keyword>
<keyword id="KW-0132">Cell division</keyword>
<keyword id="KW-0133">Cell shape</keyword>
<keyword id="KW-0961">Cell wall biogenesis/degradation</keyword>
<keyword id="KW-0963">Cytoplasm</keyword>
<keyword id="KW-0573">Peptidoglycan synthesis</keyword>
<keyword id="KW-0670">Pyruvate</keyword>
<keyword id="KW-1185">Reference proteome</keyword>
<keyword id="KW-0808">Transferase</keyword>
<protein>
    <recommendedName>
        <fullName evidence="1">UDP-N-acetylglucosamine 1-carboxyvinyltransferase</fullName>
        <ecNumber evidence="1">2.5.1.7</ecNumber>
    </recommendedName>
    <alternativeName>
        <fullName evidence="1">Enoylpyruvate transferase</fullName>
    </alternativeName>
    <alternativeName>
        <fullName evidence="1">UDP-N-acetylglucosamine enolpyruvyl transferase</fullName>
        <shortName evidence="1">EPT</shortName>
    </alternativeName>
</protein>
<accession>O67315</accession>
<proteinExistence type="evidence at protein level"/>
<gene>
    <name evidence="1" type="primary">murA</name>
    <name type="ordered locus">aq_1281</name>
</gene>
<reference key="1">
    <citation type="journal article" date="1998" name="Nature">
        <title>The complete genome of the hyperthermophilic bacterium Aquifex aeolicus.</title>
        <authorList>
            <person name="Deckert G."/>
            <person name="Warren P.V."/>
            <person name="Gaasterland T."/>
            <person name="Young W.G."/>
            <person name="Lenox A.L."/>
            <person name="Graham D.E."/>
            <person name="Overbeek R."/>
            <person name="Snead M.A."/>
            <person name="Keller M."/>
            <person name="Aujay M."/>
            <person name="Huber R."/>
            <person name="Feldman R.A."/>
            <person name="Short J.M."/>
            <person name="Olsen G.J."/>
            <person name="Swanson R.V."/>
        </authorList>
    </citation>
    <scope>NUCLEOTIDE SEQUENCE [LARGE SCALE GENOMIC DNA]</scope>
    <source>
        <strain>VF5</strain>
    </source>
</reference>
<reference evidence="4" key="2">
    <citation type="submission" date="2007-04" db="PDB data bank">
        <title>Crystal structure of UDP-N-acetylglucosamine 1-carboxyvinyltransferase from Aquifex aeolicus VF5.</title>
        <authorList>
            <person name="Kitamura Y."/>
            <person name="Yokoyama S."/>
            <person name="Kuramitsu S."/>
        </authorList>
    </citation>
    <scope>X-RAY CRYSTALLOGRAPHY (1.81 ANGSTROMS) IN COMPLEX WITH UDP-N-ACETYLGLUCOSAMINE</scope>
</reference>
<reference evidence="5" key="3">
    <citation type="journal article" date="2012" name="J. Biol. Chem.">
        <title>Functional consequence of covalent reaction of phosphoenolpyruvate with UDP-N-acetylglucosamine 1-carboxyvinyltransferase (MurA).</title>
        <authorList>
            <person name="Zhu J.Y."/>
            <person name="Yang Y."/>
            <person name="Han H."/>
            <person name="Betzi S."/>
            <person name="Olesen S.H."/>
            <person name="Marsilio F."/>
            <person name="Schoenbrunn E."/>
        </authorList>
    </citation>
    <scope>X-RAY CRYSTALLOGRAPHY (1.81 ANGSTROMS) IN COMPLEX WITH SUBSTRATE ANALOG</scope>
    <scope>ACTIVE SITE</scope>
    <scope>FORMATION OF COVALENT REACTION INTERMEDIATE</scope>
</reference>
<dbReference type="EC" id="2.5.1.7" evidence="1"/>
<dbReference type="EMBL" id="AE000657">
    <property type="protein sequence ID" value="AAC07268.1"/>
    <property type="molecule type" value="Genomic_DNA"/>
</dbReference>
<dbReference type="PIR" id="H70410">
    <property type="entry name" value="H70410"/>
</dbReference>
<dbReference type="RefSeq" id="NP_213879.1">
    <property type="nucleotide sequence ID" value="NC_000918.1"/>
</dbReference>
<dbReference type="RefSeq" id="WP_010880817.1">
    <property type="nucleotide sequence ID" value="NC_000918.1"/>
</dbReference>
<dbReference type="PDB" id="2YVW">
    <property type="method" value="X-ray"/>
    <property type="resolution" value="1.81 A"/>
    <property type="chains" value="A=1-425"/>
</dbReference>
<dbReference type="PDB" id="3SWG">
    <property type="method" value="X-ray"/>
    <property type="resolution" value="1.81 A"/>
    <property type="chains" value="A=1-425"/>
</dbReference>
<dbReference type="PDBsum" id="2YVW"/>
<dbReference type="PDBsum" id="3SWG"/>
<dbReference type="SMR" id="O67315"/>
<dbReference type="FunCoup" id="O67315">
    <property type="interactions" value="380"/>
</dbReference>
<dbReference type="STRING" id="224324.aq_1281"/>
<dbReference type="EnsemblBacteria" id="AAC07268">
    <property type="protein sequence ID" value="AAC07268"/>
    <property type="gene ID" value="aq_1281"/>
</dbReference>
<dbReference type="KEGG" id="aae:aq_1281"/>
<dbReference type="PATRIC" id="fig|224324.8.peg.1002"/>
<dbReference type="eggNOG" id="COG0766">
    <property type="taxonomic scope" value="Bacteria"/>
</dbReference>
<dbReference type="HOGENOM" id="CLU_027387_0_0_0"/>
<dbReference type="InParanoid" id="O67315"/>
<dbReference type="OrthoDB" id="9803760at2"/>
<dbReference type="UniPathway" id="UPA00219"/>
<dbReference type="EvolutionaryTrace" id="O67315"/>
<dbReference type="Proteomes" id="UP000000798">
    <property type="component" value="Chromosome"/>
</dbReference>
<dbReference type="GO" id="GO:0005737">
    <property type="term" value="C:cytoplasm"/>
    <property type="evidence" value="ECO:0007669"/>
    <property type="project" value="UniProtKB-SubCell"/>
</dbReference>
<dbReference type="GO" id="GO:0008760">
    <property type="term" value="F:UDP-N-acetylglucosamine 1-carboxyvinyltransferase activity"/>
    <property type="evidence" value="ECO:0007669"/>
    <property type="project" value="UniProtKB-UniRule"/>
</dbReference>
<dbReference type="GO" id="GO:0051301">
    <property type="term" value="P:cell division"/>
    <property type="evidence" value="ECO:0007669"/>
    <property type="project" value="UniProtKB-KW"/>
</dbReference>
<dbReference type="GO" id="GO:0071555">
    <property type="term" value="P:cell wall organization"/>
    <property type="evidence" value="ECO:0007669"/>
    <property type="project" value="UniProtKB-KW"/>
</dbReference>
<dbReference type="GO" id="GO:0009252">
    <property type="term" value="P:peptidoglycan biosynthetic process"/>
    <property type="evidence" value="ECO:0007669"/>
    <property type="project" value="UniProtKB-UniRule"/>
</dbReference>
<dbReference type="GO" id="GO:0008360">
    <property type="term" value="P:regulation of cell shape"/>
    <property type="evidence" value="ECO:0007669"/>
    <property type="project" value="UniProtKB-KW"/>
</dbReference>
<dbReference type="GO" id="GO:0019277">
    <property type="term" value="P:UDP-N-acetylgalactosamine biosynthetic process"/>
    <property type="evidence" value="ECO:0007669"/>
    <property type="project" value="InterPro"/>
</dbReference>
<dbReference type="CDD" id="cd01555">
    <property type="entry name" value="UdpNAET"/>
    <property type="match status" value="1"/>
</dbReference>
<dbReference type="Gene3D" id="3.65.10.10">
    <property type="entry name" value="Enolpyruvate transferase domain"/>
    <property type="match status" value="2"/>
</dbReference>
<dbReference type="HAMAP" id="MF_00111">
    <property type="entry name" value="MurA"/>
    <property type="match status" value="1"/>
</dbReference>
<dbReference type="InterPro" id="IPR001986">
    <property type="entry name" value="Enolpyruvate_Tfrase_dom"/>
</dbReference>
<dbReference type="InterPro" id="IPR036968">
    <property type="entry name" value="Enolpyruvate_Tfrase_sf"/>
</dbReference>
<dbReference type="InterPro" id="IPR050068">
    <property type="entry name" value="MurA_subfamily"/>
</dbReference>
<dbReference type="InterPro" id="IPR013792">
    <property type="entry name" value="RNA3'P_cycl/enolpyr_Trfase_a/b"/>
</dbReference>
<dbReference type="InterPro" id="IPR005750">
    <property type="entry name" value="UDP_GlcNAc_COvinyl_MurA"/>
</dbReference>
<dbReference type="NCBIfam" id="TIGR01072">
    <property type="entry name" value="murA"/>
    <property type="match status" value="1"/>
</dbReference>
<dbReference type="NCBIfam" id="NF006873">
    <property type="entry name" value="PRK09369.1"/>
    <property type="match status" value="1"/>
</dbReference>
<dbReference type="PANTHER" id="PTHR43783">
    <property type="entry name" value="UDP-N-ACETYLGLUCOSAMINE 1-CARBOXYVINYLTRANSFERASE"/>
    <property type="match status" value="1"/>
</dbReference>
<dbReference type="PANTHER" id="PTHR43783:SF1">
    <property type="entry name" value="UDP-N-ACETYLGLUCOSAMINE 1-CARBOXYVINYLTRANSFERASE"/>
    <property type="match status" value="1"/>
</dbReference>
<dbReference type="Pfam" id="PF00275">
    <property type="entry name" value="EPSP_synthase"/>
    <property type="match status" value="1"/>
</dbReference>
<dbReference type="SUPFAM" id="SSF55205">
    <property type="entry name" value="EPT/RTPC-like"/>
    <property type="match status" value="1"/>
</dbReference>